<proteinExistence type="inferred from homology"/>
<sequence>MSGQPKRLMVMAGGTGGHVFPGLAVAHHLMAQGWQVRWLGTADRMEADLVPKHGIDIDFIRISGLRGKGVKALLAAPLRIFNAWRQARAIMKRFKPDVVLGMGGYVSGPGGLAAWSLGIPVVLHEQNGIAGLTNQWLARIATTVMQAFPGAFPNAEVVGNPVRTDVLALPLPQVRLAGRDGPIRVLVVGGSQGARVLNQTMPQVAARLGDTVTIWHQSGKGAQLTVEQAYAGTGQPQHKVTEFIDDMAAAYAWADVVVCRSGALTVSEIAAAGLPAIFVPFQHKDRQQYWNALPLENAGAAKIFEQPQFTVEAVADTLAGWSREALLTMAERARAVSIPDATERVASEVSRVART</sequence>
<dbReference type="EC" id="2.4.1.227" evidence="1"/>
<dbReference type="EMBL" id="FM200053">
    <property type="protein sequence ID" value="CAR58237.1"/>
    <property type="molecule type" value="Genomic_DNA"/>
</dbReference>
<dbReference type="RefSeq" id="WP_000016620.1">
    <property type="nucleotide sequence ID" value="NC_011147.1"/>
</dbReference>
<dbReference type="SMR" id="B5BLC2"/>
<dbReference type="CAZy" id="GT28">
    <property type="family name" value="Glycosyltransferase Family 28"/>
</dbReference>
<dbReference type="KEGG" id="sek:SSPA0126"/>
<dbReference type="HOGENOM" id="CLU_037404_2_0_6"/>
<dbReference type="UniPathway" id="UPA00219"/>
<dbReference type="Proteomes" id="UP000001869">
    <property type="component" value="Chromosome"/>
</dbReference>
<dbReference type="GO" id="GO:0005886">
    <property type="term" value="C:plasma membrane"/>
    <property type="evidence" value="ECO:0007669"/>
    <property type="project" value="UniProtKB-SubCell"/>
</dbReference>
<dbReference type="GO" id="GO:0051991">
    <property type="term" value="F:UDP-N-acetyl-D-glucosamine:N-acetylmuramoyl-L-alanyl-D-glutamyl-meso-2,6-diaminopimelyl-D-alanyl-D-alanine-diphosphoundecaprenol 4-beta-N-acetylglucosaminlytransferase activity"/>
    <property type="evidence" value="ECO:0007669"/>
    <property type="project" value="RHEA"/>
</dbReference>
<dbReference type="GO" id="GO:0050511">
    <property type="term" value="F:undecaprenyldiphospho-muramoylpentapeptide beta-N-acetylglucosaminyltransferase activity"/>
    <property type="evidence" value="ECO:0007669"/>
    <property type="project" value="UniProtKB-UniRule"/>
</dbReference>
<dbReference type="GO" id="GO:0005975">
    <property type="term" value="P:carbohydrate metabolic process"/>
    <property type="evidence" value="ECO:0007669"/>
    <property type="project" value="InterPro"/>
</dbReference>
<dbReference type="GO" id="GO:0051301">
    <property type="term" value="P:cell division"/>
    <property type="evidence" value="ECO:0007669"/>
    <property type="project" value="UniProtKB-KW"/>
</dbReference>
<dbReference type="GO" id="GO:0071555">
    <property type="term" value="P:cell wall organization"/>
    <property type="evidence" value="ECO:0007669"/>
    <property type="project" value="UniProtKB-KW"/>
</dbReference>
<dbReference type="GO" id="GO:0030259">
    <property type="term" value="P:lipid glycosylation"/>
    <property type="evidence" value="ECO:0007669"/>
    <property type="project" value="UniProtKB-UniRule"/>
</dbReference>
<dbReference type="GO" id="GO:0009252">
    <property type="term" value="P:peptidoglycan biosynthetic process"/>
    <property type="evidence" value="ECO:0007669"/>
    <property type="project" value="UniProtKB-UniRule"/>
</dbReference>
<dbReference type="GO" id="GO:0008360">
    <property type="term" value="P:regulation of cell shape"/>
    <property type="evidence" value="ECO:0007669"/>
    <property type="project" value="UniProtKB-KW"/>
</dbReference>
<dbReference type="CDD" id="cd03785">
    <property type="entry name" value="GT28_MurG"/>
    <property type="match status" value="1"/>
</dbReference>
<dbReference type="FunFam" id="3.40.50.2000:FF:000016">
    <property type="entry name" value="UDP-N-acetylglucosamine--N-acetylmuramyl-(pentapeptide) pyrophosphoryl-undecaprenol N-acetylglucosamine transferase"/>
    <property type="match status" value="1"/>
</dbReference>
<dbReference type="FunFam" id="3.40.50.2000:FF:000018">
    <property type="entry name" value="UDP-N-acetylglucosamine--N-acetylmuramyl-(pentapeptide) pyrophosphoryl-undecaprenol N-acetylglucosamine transferase"/>
    <property type="match status" value="1"/>
</dbReference>
<dbReference type="Gene3D" id="3.40.50.2000">
    <property type="entry name" value="Glycogen Phosphorylase B"/>
    <property type="match status" value="2"/>
</dbReference>
<dbReference type="HAMAP" id="MF_00033">
    <property type="entry name" value="MurG"/>
    <property type="match status" value="1"/>
</dbReference>
<dbReference type="InterPro" id="IPR006009">
    <property type="entry name" value="GlcNAc_MurG"/>
</dbReference>
<dbReference type="InterPro" id="IPR007235">
    <property type="entry name" value="Glyco_trans_28_C"/>
</dbReference>
<dbReference type="InterPro" id="IPR004276">
    <property type="entry name" value="GlycoTrans_28_N"/>
</dbReference>
<dbReference type="NCBIfam" id="TIGR01133">
    <property type="entry name" value="murG"/>
    <property type="match status" value="1"/>
</dbReference>
<dbReference type="PANTHER" id="PTHR21015:SF22">
    <property type="entry name" value="GLYCOSYLTRANSFERASE"/>
    <property type="match status" value="1"/>
</dbReference>
<dbReference type="PANTHER" id="PTHR21015">
    <property type="entry name" value="UDP-N-ACETYLGLUCOSAMINE--N-ACETYLMURAMYL-(PENTAPEPTIDE) PYROPHOSPHORYL-UNDECAPRENOL N-ACETYLGLUCOSAMINE TRANSFERASE 1"/>
    <property type="match status" value="1"/>
</dbReference>
<dbReference type="Pfam" id="PF04101">
    <property type="entry name" value="Glyco_tran_28_C"/>
    <property type="match status" value="1"/>
</dbReference>
<dbReference type="Pfam" id="PF03033">
    <property type="entry name" value="Glyco_transf_28"/>
    <property type="match status" value="1"/>
</dbReference>
<dbReference type="SUPFAM" id="SSF53756">
    <property type="entry name" value="UDP-Glycosyltransferase/glycogen phosphorylase"/>
    <property type="match status" value="1"/>
</dbReference>
<evidence type="ECO:0000255" key="1">
    <source>
        <dbReference type="HAMAP-Rule" id="MF_00033"/>
    </source>
</evidence>
<feature type="chain" id="PRO_1000090471" description="UDP-N-acetylglucosamine--N-acetylmuramyl-(pentapeptide) pyrophosphoryl-undecaprenol N-acetylglucosamine transferase">
    <location>
        <begin position="1"/>
        <end position="355"/>
    </location>
</feature>
<feature type="binding site" evidence="1">
    <location>
        <begin position="15"/>
        <end position="17"/>
    </location>
    <ligand>
        <name>UDP-N-acetyl-alpha-D-glucosamine</name>
        <dbReference type="ChEBI" id="CHEBI:57705"/>
    </ligand>
</feature>
<feature type="binding site" evidence="1">
    <location>
        <position position="127"/>
    </location>
    <ligand>
        <name>UDP-N-acetyl-alpha-D-glucosamine</name>
        <dbReference type="ChEBI" id="CHEBI:57705"/>
    </ligand>
</feature>
<feature type="binding site" evidence="1">
    <location>
        <position position="163"/>
    </location>
    <ligand>
        <name>UDP-N-acetyl-alpha-D-glucosamine</name>
        <dbReference type="ChEBI" id="CHEBI:57705"/>
    </ligand>
</feature>
<feature type="binding site" evidence="1">
    <location>
        <position position="191"/>
    </location>
    <ligand>
        <name>UDP-N-acetyl-alpha-D-glucosamine</name>
        <dbReference type="ChEBI" id="CHEBI:57705"/>
    </ligand>
</feature>
<feature type="binding site" evidence="1">
    <location>
        <position position="244"/>
    </location>
    <ligand>
        <name>UDP-N-acetyl-alpha-D-glucosamine</name>
        <dbReference type="ChEBI" id="CHEBI:57705"/>
    </ligand>
</feature>
<feature type="binding site" evidence="1">
    <location>
        <begin position="263"/>
        <end position="268"/>
    </location>
    <ligand>
        <name>UDP-N-acetyl-alpha-D-glucosamine</name>
        <dbReference type="ChEBI" id="CHEBI:57705"/>
    </ligand>
</feature>
<feature type="binding site" evidence="1">
    <location>
        <position position="288"/>
    </location>
    <ligand>
        <name>UDP-N-acetyl-alpha-D-glucosamine</name>
        <dbReference type="ChEBI" id="CHEBI:57705"/>
    </ligand>
</feature>
<name>MURG_SALPK</name>
<comment type="function">
    <text evidence="1">Cell wall formation. Catalyzes the transfer of a GlcNAc subunit on undecaprenyl-pyrophosphoryl-MurNAc-pentapeptide (lipid intermediate I) to form undecaprenyl-pyrophosphoryl-MurNAc-(pentapeptide)GlcNAc (lipid intermediate II).</text>
</comment>
<comment type="catalytic activity">
    <reaction evidence="1">
        <text>di-trans,octa-cis-undecaprenyl diphospho-N-acetyl-alpha-D-muramoyl-L-alanyl-D-glutamyl-meso-2,6-diaminopimeloyl-D-alanyl-D-alanine + UDP-N-acetyl-alpha-D-glucosamine = di-trans,octa-cis-undecaprenyl diphospho-[N-acetyl-alpha-D-glucosaminyl-(1-&gt;4)]-N-acetyl-alpha-D-muramoyl-L-alanyl-D-glutamyl-meso-2,6-diaminopimeloyl-D-alanyl-D-alanine + UDP + H(+)</text>
        <dbReference type="Rhea" id="RHEA:31227"/>
        <dbReference type="ChEBI" id="CHEBI:15378"/>
        <dbReference type="ChEBI" id="CHEBI:57705"/>
        <dbReference type="ChEBI" id="CHEBI:58223"/>
        <dbReference type="ChEBI" id="CHEBI:61387"/>
        <dbReference type="ChEBI" id="CHEBI:61388"/>
        <dbReference type="EC" id="2.4.1.227"/>
    </reaction>
</comment>
<comment type="pathway">
    <text evidence="1">Cell wall biogenesis; peptidoglycan biosynthesis.</text>
</comment>
<comment type="subcellular location">
    <subcellularLocation>
        <location evidence="1">Cell inner membrane</location>
        <topology evidence="1">Peripheral membrane protein</topology>
        <orientation evidence="1">Cytoplasmic side</orientation>
    </subcellularLocation>
</comment>
<comment type="similarity">
    <text evidence="1">Belongs to the glycosyltransferase 28 family. MurG subfamily.</text>
</comment>
<accession>B5BLC2</accession>
<organism>
    <name type="scientific">Salmonella paratyphi A (strain AKU_12601)</name>
    <dbReference type="NCBI Taxonomy" id="554290"/>
    <lineage>
        <taxon>Bacteria</taxon>
        <taxon>Pseudomonadati</taxon>
        <taxon>Pseudomonadota</taxon>
        <taxon>Gammaproteobacteria</taxon>
        <taxon>Enterobacterales</taxon>
        <taxon>Enterobacteriaceae</taxon>
        <taxon>Salmonella</taxon>
    </lineage>
</organism>
<reference key="1">
    <citation type="journal article" date="2009" name="BMC Genomics">
        <title>Pseudogene accumulation in the evolutionary histories of Salmonella enterica serovars Paratyphi A and Typhi.</title>
        <authorList>
            <person name="Holt K.E."/>
            <person name="Thomson N.R."/>
            <person name="Wain J."/>
            <person name="Langridge G.C."/>
            <person name="Hasan R."/>
            <person name="Bhutta Z.A."/>
            <person name="Quail M.A."/>
            <person name="Norbertczak H."/>
            <person name="Walker D."/>
            <person name="Simmonds M."/>
            <person name="White B."/>
            <person name="Bason N."/>
            <person name="Mungall K."/>
            <person name="Dougan G."/>
            <person name="Parkhill J."/>
        </authorList>
    </citation>
    <scope>NUCLEOTIDE SEQUENCE [LARGE SCALE GENOMIC DNA]</scope>
    <source>
        <strain>AKU_12601</strain>
    </source>
</reference>
<keyword id="KW-0131">Cell cycle</keyword>
<keyword id="KW-0132">Cell division</keyword>
<keyword id="KW-0997">Cell inner membrane</keyword>
<keyword id="KW-1003">Cell membrane</keyword>
<keyword id="KW-0133">Cell shape</keyword>
<keyword id="KW-0961">Cell wall biogenesis/degradation</keyword>
<keyword id="KW-0328">Glycosyltransferase</keyword>
<keyword id="KW-0472">Membrane</keyword>
<keyword id="KW-0573">Peptidoglycan synthesis</keyword>
<keyword id="KW-0808">Transferase</keyword>
<gene>
    <name evidence="1" type="primary">murG</name>
    <name type="ordered locus">SSPA0126</name>
</gene>
<protein>
    <recommendedName>
        <fullName evidence="1">UDP-N-acetylglucosamine--N-acetylmuramyl-(pentapeptide) pyrophosphoryl-undecaprenol N-acetylglucosamine transferase</fullName>
        <ecNumber evidence="1">2.4.1.227</ecNumber>
    </recommendedName>
    <alternativeName>
        <fullName evidence="1">Undecaprenyl-PP-MurNAc-pentapeptide-UDPGlcNAc GlcNAc transferase</fullName>
    </alternativeName>
</protein>